<proteinExistence type="inferred from homology"/>
<keyword id="KW-0687">Ribonucleoprotein</keyword>
<keyword id="KW-0689">Ribosomal protein</keyword>
<gene>
    <name evidence="1" type="primary">rplL</name>
    <name type="ordered locus">Shewmr7_0186</name>
</gene>
<organism>
    <name type="scientific">Shewanella sp. (strain MR-7)</name>
    <dbReference type="NCBI Taxonomy" id="60481"/>
    <lineage>
        <taxon>Bacteria</taxon>
        <taxon>Pseudomonadati</taxon>
        <taxon>Pseudomonadota</taxon>
        <taxon>Gammaproteobacteria</taxon>
        <taxon>Alteromonadales</taxon>
        <taxon>Shewanellaceae</taxon>
        <taxon>Shewanella</taxon>
    </lineage>
</organism>
<evidence type="ECO:0000255" key="1">
    <source>
        <dbReference type="HAMAP-Rule" id="MF_00368"/>
    </source>
</evidence>
<evidence type="ECO:0000305" key="2"/>
<accession>Q0I0B3</accession>
<sequence length="123" mass="12548">MSITKDQILEAFAAMSVMEVVELIEAMEEKFGVSAAAAVVAGGAADAGAAAEEQTEFTVMLTAHGDNKVAVIKAIRGATGLGLKEAKAMSEAAPVAVKEGVSKEEAEALKKELVEAGATVEIK</sequence>
<reference key="1">
    <citation type="submission" date="2006-08" db="EMBL/GenBank/DDBJ databases">
        <title>Complete sequence of chromosome 1 of Shewanella sp. MR-7.</title>
        <authorList>
            <person name="Copeland A."/>
            <person name="Lucas S."/>
            <person name="Lapidus A."/>
            <person name="Barry K."/>
            <person name="Detter J.C."/>
            <person name="Glavina del Rio T."/>
            <person name="Hammon N."/>
            <person name="Israni S."/>
            <person name="Dalin E."/>
            <person name="Tice H."/>
            <person name="Pitluck S."/>
            <person name="Kiss H."/>
            <person name="Brettin T."/>
            <person name="Bruce D."/>
            <person name="Han C."/>
            <person name="Tapia R."/>
            <person name="Gilna P."/>
            <person name="Schmutz J."/>
            <person name="Larimer F."/>
            <person name="Land M."/>
            <person name="Hauser L."/>
            <person name="Kyrpides N."/>
            <person name="Mikhailova N."/>
            <person name="Nealson K."/>
            <person name="Konstantinidis K."/>
            <person name="Klappenbach J."/>
            <person name="Tiedje J."/>
            <person name="Richardson P."/>
        </authorList>
    </citation>
    <scope>NUCLEOTIDE SEQUENCE [LARGE SCALE GENOMIC DNA]</scope>
    <source>
        <strain>MR-7</strain>
    </source>
</reference>
<name>RL7_SHESR</name>
<dbReference type="EMBL" id="CP000444">
    <property type="protein sequence ID" value="ABI41192.1"/>
    <property type="molecule type" value="Genomic_DNA"/>
</dbReference>
<dbReference type="SMR" id="Q0I0B3"/>
<dbReference type="KEGG" id="shm:Shewmr7_0186"/>
<dbReference type="HOGENOM" id="CLU_086499_3_2_6"/>
<dbReference type="GO" id="GO:0022625">
    <property type="term" value="C:cytosolic large ribosomal subunit"/>
    <property type="evidence" value="ECO:0007669"/>
    <property type="project" value="TreeGrafter"/>
</dbReference>
<dbReference type="GO" id="GO:0003729">
    <property type="term" value="F:mRNA binding"/>
    <property type="evidence" value="ECO:0007669"/>
    <property type="project" value="TreeGrafter"/>
</dbReference>
<dbReference type="GO" id="GO:0003735">
    <property type="term" value="F:structural constituent of ribosome"/>
    <property type="evidence" value="ECO:0007669"/>
    <property type="project" value="InterPro"/>
</dbReference>
<dbReference type="GO" id="GO:0006412">
    <property type="term" value="P:translation"/>
    <property type="evidence" value="ECO:0007669"/>
    <property type="project" value="UniProtKB-UniRule"/>
</dbReference>
<dbReference type="CDD" id="cd00387">
    <property type="entry name" value="Ribosomal_L7_L12"/>
    <property type="match status" value="1"/>
</dbReference>
<dbReference type="FunFam" id="1.20.5.710:FF:000001">
    <property type="entry name" value="50S ribosomal protein L7/L12"/>
    <property type="match status" value="1"/>
</dbReference>
<dbReference type="FunFam" id="3.30.1390.10:FF:000001">
    <property type="entry name" value="50S ribosomal protein L7/L12"/>
    <property type="match status" value="1"/>
</dbReference>
<dbReference type="Gene3D" id="3.30.1390.10">
    <property type="match status" value="1"/>
</dbReference>
<dbReference type="Gene3D" id="1.20.5.710">
    <property type="entry name" value="Single helix bin"/>
    <property type="match status" value="1"/>
</dbReference>
<dbReference type="HAMAP" id="MF_00368">
    <property type="entry name" value="Ribosomal_bL12"/>
    <property type="match status" value="1"/>
</dbReference>
<dbReference type="InterPro" id="IPR000206">
    <property type="entry name" value="Ribosomal_bL12"/>
</dbReference>
<dbReference type="InterPro" id="IPR013823">
    <property type="entry name" value="Ribosomal_bL12_C"/>
</dbReference>
<dbReference type="InterPro" id="IPR014719">
    <property type="entry name" value="Ribosomal_bL12_C/ClpS-like"/>
</dbReference>
<dbReference type="InterPro" id="IPR008932">
    <property type="entry name" value="Ribosomal_bL12_oligo"/>
</dbReference>
<dbReference type="InterPro" id="IPR036235">
    <property type="entry name" value="Ribosomal_bL12_oligo_N_sf"/>
</dbReference>
<dbReference type="NCBIfam" id="TIGR00855">
    <property type="entry name" value="L12"/>
    <property type="match status" value="1"/>
</dbReference>
<dbReference type="PANTHER" id="PTHR45987">
    <property type="entry name" value="39S RIBOSOMAL PROTEIN L12"/>
    <property type="match status" value="1"/>
</dbReference>
<dbReference type="PANTHER" id="PTHR45987:SF4">
    <property type="entry name" value="LARGE RIBOSOMAL SUBUNIT PROTEIN BL12M"/>
    <property type="match status" value="1"/>
</dbReference>
<dbReference type="Pfam" id="PF00542">
    <property type="entry name" value="Ribosomal_L12"/>
    <property type="match status" value="1"/>
</dbReference>
<dbReference type="Pfam" id="PF16320">
    <property type="entry name" value="Ribosomal_L12_N"/>
    <property type="match status" value="1"/>
</dbReference>
<dbReference type="SUPFAM" id="SSF54736">
    <property type="entry name" value="ClpS-like"/>
    <property type="match status" value="1"/>
</dbReference>
<dbReference type="SUPFAM" id="SSF48300">
    <property type="entry name" value="Ribosomal protein L7/12, oligomerisation (N-terminal) domain"/>
    <property type="match status" value="1"/>
</dbReference>
<protein>
    <recommendedName>
        <fullName evidence="1">Large ribosomal subunit protein bL12</fullName>
    </recommendedName>
    <alternativeName>
        <fullName evidence="2">50S ribosomal protein L7/L12</fullName>
    </alternativeName>
</protein>
<feature type="chain" id="PRO_1000007088" description="Large ribosomal subunit protein bL12">
    <location>
        <begin position="1"/>
        <end position="123"/>
    </location>
</feature>
<comment type="function">
    <text evidence="1">Forms part of the ribosomal stalk which helps the ribosome interact with GTP-bound translation factors. Is thus essential for accurate translation.</text>
</comment>
<comment type="subunit">
    <text evidence="1">Homodimer. Part of the ribosomal stalk of the 50S ribosomal subunit. Forms a multimeric L10(L12)X complex, where L10 forms an elongated spine to which 2 to 4 L12 dimers bind in a sequential fashion. Binds GTP-bound translation factors.</text>
</comment>
<comment type="similarity">
    <text evidence="1">Belongs to the bacterial ribosomal protein bL12 family.</text>
</comment>